<accession>Q0E0A6</accession>
<accession>A0A0P0VKI4</accession>
<accession>Q6Z7D8</accession>
<reference key="1">
    <citation type="journal article" date="2005" name="Nature">
        <title>The map-based sequence of the rice genome.</title>
        <authorList>
            <consortium name="International rice genome sequencing project (IRGSP)"/>
        </authorList>
    </citation>
    <scope>NUCLEOTIDE SEQUENCE [LARGE SCALE GENOMIC DNA]</scope>
    <source>
        <strain>cv. Nipponbare</strain>
    </source>
</reference>
<reference key="2">
    <citation type="journal article" date="2008" name="Nucleic Acids Res.">
        <title>The rice annotation project database (RAP-DB): 2008 update.</title>
        <authorList>
            <consortium name="The rice annotation project (RAP)"/>
        </authorList>
    </citation>
    <scope>GENOME REANNOTATION</scope>
    <source>
        <strain>cv. Nipponbare</strain>
    </source>
</reference>
<reference key="3">
    <citation type="journal article" date="2013" name="Rice">
        <title>Improvement of the Oryza sativa Nipponbare reference genome using next generation sequence and optical map data.</title>
        <authorList>
            <person name="Kawahara Y."/>
            <person name="de la Bastide M."/>
            <person name="Hamilton J.P."/>
            <person name="Kanamori H."/>
            <person name="McCombie W.R."/>
            <person name="Ouyang S."/>
            <person name="Schwartz D.C."/>
            <person name="Tanaka T."/>
            <person name="Wu J."/>
            <person name="Zhou S."/>
            <person name="Childs K.L."/>
            <person name="Davidson R.M."/>
            <person name="Lin H."/>
            <person name="Quesada-Ocampo L."/>
            <person name="Vaillancourt B."/>
            <person name="Sakai H."/>
            <person name="Lee S.S."/>
            <person name="Kim J."/>
            <person name="Numa H."/>
            <person name="Itoh T."/>
            <person name="Buell C.R."/>
            <person name="Matsumoto T."/>
        </authorList>
    </citation>
    <scope>GENOME REANNOTATION</scope>
    <source>
        <strain>cv. Nipponbare</strain>
    </source>
</reference>
<reference key="4">
    <citation type="journal article" date="2003" name="Science">
        <title>Collection, mapping, and annotation of over 28,000 cDNA clones from japonica rice.</title>
        <authorList>
            <consortium name="The rice full-length cDNA consortium"/>
        </authorList>
    </citation>
    <scope>NUCLEOTIDE SEQUENCE [LARGE SCALE MRNA]</scope>
    <source>
        <strain>cv. Nipponbare</strain>
    </source>
</reference>
<reference key="5">
    <citation type="journal article" date="2000" name="Mol. Gen. Genet.">
        <title>HD-Zip proteins of families I and II from rice: interactions and functional properties.</title>
        <authorList>
            <person name="Meijer A.H."/>
            <person name="de Kam R.J."/>
            <person name="d'Erfurth I."/>
            <person name="Shen W.-B."/>
            <person name="Hoge J.H.C."/>
        </authorList>
    </citation>
    <scope>FUNCTION</scope>
    <scope>SUBUNIT</scope>
    <scope>TISSUE SPECIFICITY</scope>
</reference>
<reference key="6">
    <citation type="journal article" date="2008" name="Plant Mol. Biol.">
        <title>A genome-wide survey of HD-Zip genes in rice and analysis of drought-responsive family members.</title>
        <authorList>
            <person name="Agalou A."/>
            <person name="Purwantomo S."/>
            <person name="Oevernaes E."/>
            <person name="Johannesson H."/>
            <person name="Zhu X."/>
            <person name="Estiati A."/>
            <person name="de Kam R.J."/>
            <person name="Engstroem P."/>
            <person name="Slamet-Loedin I.H."/>
            <person name="Zhu Z."/>
            <person name="Wang M."/>
            <person name="Xiong L."/>
            <person name="Meijer A.H."/>
            <person name="Ouwerkerk P.B.F."/>
        </authorList>
    </citation>
    <scope>TISSUE SPECIFICITY</scope>
    <scope>GENE FAMILY</scope>
    <scope>NOMENCLATURE</scope>
</reference>
<name>HOX7_ORYSJ</name>
<gene>
    <name type="primary">HOX7</name>
    <name type="ordered locus">Os02g0565600</name>
    <name type="ordered locus">LOC_Os02g35770</name>
    <name type="ORF">P0020C11.33</name>
</gene>
<organism>
    <name type="scientific">Oryza sativa subsp. japonica</name>
    <name type="common">Rice</name>
    <dbReference type="NCBI Taxonomy" id="39947"/>
    <lineage>
        <taxon>Eukaryota</taxon>
        <taxon>Viridiplantae</taxon>
        <taxon>Streptophyta</taxon>
        <taxon>Embryophyta</taxon>
        <taxon>Tracheophyta</taxon>
        <taxon>Spermatophyta</taxon>
        <taxon>Magnoliopsida</taxon>
        <taxon>Liliopsida</taxon>
        <taxon>Poales</taxon>
        <taxon>Poaceae</taxon>
        <taxon>BOP clade</taxon>
        <taxon>Oryzoideae</taxon>
        <taxon>Oryzeae</taxon>
        <taxon>Oryzinae</taxon>
        <taxon>Oryza</taxon>
        <taxon>Oryza sativa</taxon>
    </lineage>
</organism>
<sequence>MELELSLGDSPAPVKATIAPTPVLIPTCMGDEEDLELVLGVRATRRDEQDDQTTCTQSSEEAMEGEEDETRPHGEAPVESLSFPLFVSSAETGSANSEMCTRGFDVNTRPADGGAEAGRPSSPSSMQEASTRQQVADQEAADDEDNGGGGARKKLRLSKEQSSFLEDSFKEHSTLTPKQKSDLANRLNLRPRQVEVWFQNRRARTKLKQTEVDCEHLKRCCERLTRENRRLQREVAELRGTLRTTTSSYPPLYGLHHLPAAAGTVFRVCPSCEHSKVVAAAASESFSPRVFAGGGAPAAITAAAAVPSPGAGSPPSSSAALFGARRPHFGPFAAAVIPPVLRRQPSATS</sequence>
<evidence type="ECO:0000255" key="1">
    <source>
        <dbReference type="PROSITE-ProRule" id="PRU00108"/>
    </source>
</evidence>
<evidence type="ECO:0000256" key="2">
    <source>
        <dbReference type="SAM" id="MobiDB-lite"/>
    </source>
</evidence>
<evidence type="ECO:0000269" key="3">
    <source>
    </source>
</evidence>
<evidence type="ECO:0000269" key="4">
    <source>
    </source>
</evidence>
<evidence type="ECO:0000305" key="5"/>
<dbReference type="EMBL" id="AP004865">
    <property type="protein sequence ID" value="BAD15830.1"/>
    <property type="status" value="ALT_SEQ"/>
    <property type="molecule type" value="Genomic_DNA"/>
</dbReference>
<dbReference type="EMBL" id="AP008208">
    <property type="protein sequence ID" value="BAF09082.1"/>
    <property type="molecule type" value="Genomic_DNA"/>
</dbReference>
<dbReference type="EMBL" id="AP014958">
    <property type="protein sequence ID" value="BAS79301.1"/>
    <property type="molecule type" value="Genomic_DNA"/>
</dbReference>
<dbReference type="EMBL" id="AK064118">
    <property type="status" value="NOT_ANNOTATED_CDS"/>
    <property type="molecule type" value="mRNA"/>
</dbReference>
<dbReference type="RefSeq" id="XP_015626174.1">
    <property type="nucleotide sequence ID" value="XM_015770688.1"/>
</dbReference>
<dbReference type="SMR" id="Q0E0A6"/>
<dbReference type="FunCoup" id="Q0E0A6">
    <property type="interactions" value="3"/>
</dbReference>
<dbReference type="PaxDb" id="39947-Q0E0A6"/>
<dbReference type="EnsemblPlants" id="Os02t0565600-01">
    <property type="protein sequence ID" value="Os02t0565600-01"/>
    <property type="gene ID" value="Os02g0565600"/>
</dbReference>
<dbReference type="Gramene" id="Os02t0565600-01">
    <property type="protein sequence ID" value="Os02t0565600-01"/>
    <property type="gene ID" value="Os02g0565600"/>
</dbReference>
<dbReference type="KEGG" id="dosa:Os02g0565600"/>
<dbReference type="eggNOG" id="KOG0483">
    <property type="taxonomic scope" value="Eukaryota"/>
</dbReference>
<dbReference type="HOGENOM" id="CLU_049516_2_1_1"/>
<dbReference type="InParanoid" id="Q0E0A6"/>
<dbReference type="OMA" id="QPEEDAH"/>
<dbReference type="OrthoDB" id="6159439at2759"/>
<dbReference type="Proteomes" id="UP000000763">
    <property type="component" value="Chromosome 2"/>
</dbReference>
<dbReference type="Proteomes" id="UP000059680">
    <property type="component" value="Chromosome 2"/>
</dbReference>
<dbReference type="GO" id="GO:0005634">
    <property type="term" value="C:nucleus"/>
    <property type="evidence" value="ECO:0007669"/>
    <property type="project" value="UniProtKB-SubCell"/>
</dbReference>
<dbReference type="GO" id="GO:0000981">
    <property type="term" value="F:DNA-binding transcription factor activity, RNA polymerase II-specific"/>
    <property type="evidence" value="ECO:0007669"/>
    <property type="project" value="InterPro"/>
</dbReference>
<dbReference type="GO" id="GO:0043565">
    <property type="term" value="F:sequence-specific DNA binding"/>
    <property type="evidence" value="ECO:0007669"/>
    <property type="project" value="InterPro"/>
</dbReference>
<dbReference type="CDD" id="cd00086">
    <property type="entry name" value="homeodomain"/>
    <property type="match status" value="1"/>
</dbReference>
<dbReference type="FunFam" id="1.10.10.60:FF:000577">
    <property type="entry name" value="Homeobox-leucine zipper protein 18"/>
    <property type="match status" value="1"/>
</dbReference>
<dbReference type="Gene3D" id="1.10.10.60">
    <property type="entry name" value="Homeodomain-like"/>
    <property type="match status" value="1"/>
</dbReference>
<dbReference type="InterPro" id="IPR001356">
    <property type="entry name" value="HD"/>
</dbReference>
<dbReference type="InterPro" id="IPR050762">
    <property type="entry name" value="HD-ZIP_Homeobox_LZ_Class_II"/>
</dbReference>
<dbReference type="InterPro" id="IPR017970">
    <property type="entry name" value="Homeobox_CS"/>
</dbReference>
<dbReference type="InterPro" id="IPR009057">
    <property type="entry name" value="Homeodomain-like_sf"/>
</dbReference>
<dbReference type="InterPro" id="IPR003106">
    <property type="entry name" value="Leu_zip_homeo"/>
</dbReference>
<dbReference type="PANTHER" id="PTHR45714">
    <property type="entry name" value="HOMEOBOX-LEUCINE ZIPPER PROTEIN HAT14"/>
    <property type="match status" value="1"/>
</dbReference>
<dbReference type="PANTHER" id="PTHR45714:SF21">
    <property type="entry name" value="HOMEOBOX-LEUCINE ZIPPER PROTEIN HOX7"/>
    <property type="match status" value="1"/>
</dbReference>
<dbReference type="Pfam" id="PF02183">
    <property type="entry name" value="HALZ"/>
    <property type="match status" value="1"/>
</dbReference>
<dbReference type="Pfam" id="PF00046">
    <property type="entry name" value="Homeodomain"/>
    <property type="match status" value="1"/>
</dbReference>
<dbReference type="SMART" id="SM00340">
    <property type="entry name" value="HALZ"/>
    <property type="match status" value="1"/>
</dbReference>
<dbReference type="SMART" id="SM00389">
    <property type="entry name" value="HOX"/>
    <property type="match status" value="1"/>
</dbReference>
<dbReference type="SUPFAM" id="SSF46689">
    <property type="entry name" value="Homeodomain-like"/>
    <property type="match status" value="1"/>
</dbReference>
<dbReference type="PROSITE" id="PS00027">
    <property type="entry name" value="HOMEOBOX_1"/>
    <property type="match status" value="1"/>
</dbReference>
<dbReference type="PROSITE" id="PS50071">
    <property type="entry name" value="HOMEOBOX_2"/>
    <property type="match status" value="1"/>
</dbReference>
<feature type="chain" id="PRO_0000331687" description="Homeobox-leucine zipper protein HOX7">
    <location>
        <begin position="1"/>
        <end position="349"/>
    </location>
</feature>
<feature type="DNA-binding region" description="Homeobox" evidence="1">
    <location>
        <begin position="150"/>
        <end position="209"/>
    </location>
</feature>
<feature type="region of interest" description="Disordered" evidence="2">
    <location>
        <begin position="42"/>
        <end position="186"/>
    </location>
</feature>
<feature type="region of interest" description="Leucine-zipper">
    <location>
        <begin position="208"/>
        <end position="252"/>
    </location>
</feature>
<feature type="compositionally biased region" description="Polar residues" evidence="2">
    <location>
        <begin position="89"/>
        <end position="99"/>
    </location>
</feature>
<feature type="compositionally biased region" description="Polar residues" evidence="2">
    <location>
        <begin position="121"/>
        <end position="135"/>
    </location>
</feature>
<feature type="compositionally biased region" description="Basic and acidic residues" evidence="2">
    <location>
        <begin position="167"/>
        <end position="183"/>
    </location>
</feature>
<keyword id="KW-0238">DNA-binding</keyword>
<keyword id="KW-0371">Homeobox</keyword>
<keyword id="KW-0539">Nucleus</keyword>
<keyword id="KW-1185">Reference proteome</keyword>
<keyword id="KW-0804">Transcription</keyword>
<keyword id="KW-0805">Transcription regulation</keyword>
<protein>
    <recommendedName>
        <fullName>Homeobox-leucine zipper protein HOX7</fullName>
    </recommendedName>
    <alternativeName>
        <fullName>HD-ZIP protein HOX7</fullName>
    </alternativeName>
    <alternativeName>
        <fullName>Homeodomain transcription factor HOX7</fullName>
    </alternativeName>
    <alternativeName>
        <fullName>OsHox7</fullName>
    </alternativeName>
</protein>
<comment type="function">
    <text evidence="3">Probable transcription factor that binds to the DNA sequence 5'-CAAT[GC]ATTG-3'.</text>
</comment>
<comment type="subunit">
    <text evidence="3 5">Homodimer (Probable). May form a heterodimer with HOX1, HOX2 or HOX3.</text>
</comment>
<comment type="subcellular location">
    <subcellularLocation>
        <location evidence="5">Nucleus</location>
    </subcellularLocation>
</comment>
<comment type="tissue specificity">
    <text evidence="3 4">Expressed in seedlings, roots, leaves, nodes, internodes, flowers and embryo.</text>
</comment>
<comment type="similarity">
    <text evidence="5">Belongs to the HD-ZIP homeobox family. Class II subfamily.</text>
</comment>
<comment type="sequence caution" evidence="5">
    <conflict type="frameshift">
        <sequence resource="EMBL" id="AK064118"/>
    </conflict>
</comment>
<comment type="sequence caution" evidence="5">
    <conflict type="erroneous gene model prediction">
        <sequence resource="EMBL-CDS" id="BAD15830"/>
    </conflict>
</comment>
<proteinExistence type="evidence at protein level"/>